<protein>
    <recommendedName>
        <fullName evidence="1">Cysteine--tRNA ligase</fullName>
        <ecNumber evidence="1">6.1.1.16</ecNumber>
    </recommendedName>
    <alternativeName>
        <fullName evidence="1">Cysteinyl-tRNA synthetase</fullName>
        <shortName evidence="1">CysRS</shortName>
    </alternativeName>
</protein>
<gene>
    <name evidence="1" type="primary">cysS</name>
    <name type="ordered locus">Bmul_1203</name>
    <name type="ordered locus">BMULJ_02052</name>
</gene>
<accession>A9AHN6</accession>
<evidence type="ECO:0000255" key="1">
    <source>
        <dbReference type="HAMAP-Rule" id="MF_00041"/>
    </source>
</evidence>
<name>SYC_BURM1</name>
<proteinExistence type="inferred from homology"/>
<sequence length="465" mass="52323">MESLRIYNTLARDKQVFVPRQPGEVRMYVCGITVYDYCHVGHARMLVVFDLVQRWLRAIGYRVTYVRNITDIDDKIIRRAVENGETIKSLTDRFIDAMHEDEDALGIQRPDIEPRATQFIPQMLGMIERLEANGYAYQATDGDVNYSVRKFANYGKLSGKSLDDLRAGERVAANDAKEDPLDFVLWKRAKADDPEGASWESKYGMGRPGWHIECSAMGCTLLGEHFDIHGGGQDLQFPHHENEIAQSEGATGQTFVNYWLHNGFVQVDNEKMSKSLGNFFTIREVLERYDAEVMRFFIVRTHYRSPLNYSDVHLDDARASLTRLYTALKDVEPDALALDWNEPHAQRFAAAMNDDFNTPVAIATLFELAGEVNRTRDASLARQLKQLAGLLGLLGREPRAFLQQASGAAQAGALSVDEIEAKIAARAAAKRAKDYAEADRIRAELLDAGVALEDKPGGSTEWRRV</sequence>
<keyword id="KW-0030">Aminoacyl-tRNA synthetase</keyword>
<keyword id="KW-0067">ATP-binding</keyword>
<keyword id="KW-0963">Cytoplasm</keyword>
<keyword id="KW-0436">Ligase</keyword>
<keyword id="KW-0479">Metal-binding</keyword>
<keyword id="KW-0547">Nucleotide-binding</keyword>
<keyword id="KW-0648">Protein biosynthesis</keyword>
<keyword id="KW-1185">Reference proteome</keyword>
<keyword id="KW-0862">Zinc</keyword>
<feature type="chain" id="PRO_1000090824" description="Cysteine--tRNA ligase">
    <location>
        <begin position="1"/>
        <end position="465"/>
    </location>
</feature>
<feature type="short sequence motif" description="'HIGH' region">
    <location>
        <begin position="32"/>
        <end position="42"/>
    </location>
</feature>
<feature type="short sequence motif" description="'KMSKS' region">
    <location>
        <begin position="271"/>
        <end position="275"/>
    </location>
</feature>
<feature type="binding site" evidence="1">
    <location>
        <position position="30"/>
    </location>
    <ligand>
        <name>Zn(2+)</name>
        <dbReference type="ChEBI" id="CHEBI:29105"/>
    </ligand>
</feature>
<feature type="binding site" evidence="1">
    <location>
        <position position="214"/>
    </location>
    <ligand>
        <name>Zn(2+)</name>
        <dbReference type="ChEBI" id="CHEBI:29105"/>
    </ligand>
</feature>
<feature type="binding site" evidence="1">
    <location>
        <position position="239"/>
    </location>
    <ligand>
        <name>Zn(2+)</name>
        <dbReference type="ChEBI" id="CHEBI:29105"/>
    </ligand>
</feature>
<feature type="binding site" evidence="1">
    <location>
        <position position="243"/>
    </location>
    <ligand>
        <name>Zn(2+)</name>
        <dbReference type="ChEBI" id="CHEBI:29105"/>
    </ligand>
</feature>
<feature type="binding site" evidence="1">
    <location>
        <position position="274"/>
    </location>
    <ligand>
        <name>ATP</name>
        <dbReference type="ChEBI" id="CHEBI:30616"/>
    </ligand>
</feature>
<reference key="1">
    <citation type="submission" date="2007-10" db="EMBL/GenBank/DDBJ databases">
        <title>Complete sequence of chromosome 1 of Burkholderia multivorans ATCC 17616.</title>
        <authorList>
            <person name="Copeland A."/>
            <person name="Lucas S."/>
            <person name="Lapidus A."/>
            <person name="Barry K."/>
            <person name="Glavina del Rio T."/>
            <person name="Dalin E."/>
            <person name="Tice H."/>
            <person name="Pitluck S."/>
            <person name="Chain P."/>
            <person name="Malfatti S."/>
            <person name="Shin M."/>
            <person name="Vergez L."/>
            <person name="Schmutz J."/>
            <person name="Larimer F."/>
            <person name="Land M."/>
            <person name="Hauser L."/>
            <person name="Kyrpides N."/>
            <person name="Kim E."/>
            <person name="Tiedje J."/>
            <person name="Richardson P."/>
        </authorList>
    </citation>
    <scope>NUCLEOTIDE SEQUENCE [LARGE SCALE GENOMIC DNA]</scope>
    <source>
        <strain>ATCC 17616 / 249</strain>
    </source>
</reference>
<reference key="2">
    <citation type="submission" date="2007-04" db="EMBL/GenBank/DDBJ databases">
        <title>Complete genome sequence of Burkholderia multivorans ATCC 17616.</title>
        <authorList>
            <person name="Ohtsubo Y."/>
            <person name="Yamashita A."/>
            <person name="Kurokawa K."/>
            <person name="Takami H."/>
            <person name="Yuhara S."/>
            <person name="Nishiyama E."/>
            <person name="Endo R."/>
            <person name="Miyazaki R."/>
            <person name="Ono A."/>
            <person name="Yano K."/>
            <person name="Ito M."/>
            <person name="Sota M."/>
            <person name="Yuji N."/>
            <person name="Hattori M."/>
            <person name="Tsuda M."/>
        </authorList>
    </citation>
    <scope>NUCLEOTIDE SEQUENCE [LARGE SCALE GENOMIC DNA]</scope>
    <source>
        <strain>ATCC 17616 / 249</strain>
    </source>
</reference>
<organism>
    <name type="scientific">Burkholderia multivorans (strain ATCC 17616 / 249)</name>
    <dbReference type="NCBI Taxonomy" id="395019"/>
    <lineage>
        <taxon>Bacteria</taxon>
        <taxon>Pseudomonadati</taxon>
        <taxon>Pseudomonadota</taxon>
        <taxon>Betaproteobacteria</taxon>
        <taxon>Burkholderiales</taxon>
        <taxon>Burkholderiaceae</taxon>
        <taxon>Burkholderia</taxon>
        <taxon>Burkholderia cepacia complex</taxon>
    </lineage>
</organism>
<dbReference type="EC" id="6.1.1.16" evidence="1"/>
<dbReference type="EMBL" id="CP000868">
    <property type="protein sequence ID" value="ABX14891.1"/>
    <property type="molecule type" value="Genomic_DNA"/>
</dbReference>
<dbReference type="EMBL" id="AP009385">
    <property type="protein sequence ID" value="BAG43961.1"/>
    <property type="molecule type" value="Genomic_DNA"/>
</dbReference>
<dbReference type="RefSeq" id="WP_012213111.1">
    <property type="nucleotide sequence ID" value="NC_010084.1"/>
</dbReference>
<dbReference type="SMR" id="A9AHN6"/>
<dbReference type="STRING" id="395019.BMULJ_02052"/>
<dbReference type="GeneID" id="89570603"/>
<dbReference type="KEGG" id="bmj:BMULJ_02052"/>
<dbReference type="KEGG" id="bmu:Bmul_1203"/>
<dbReference type="eggNOG" id="COG0215">
    <property type="taxonomic scope" value="Bacteria"/>
</dbReference>
<dbReference type="HOGENOM" id="CLU_013528_0_1_4"/>
<dbReference type="Proteomes" id="UP000008815">
    <property type="component" value="Chromosome 1"/>
</dbReference>
<dbReference type="GO" id="GO:0005829">
    <property type="term" value="C:cytosol"/>
    <property type="evidence" value="ECO:0007669"/>
    <property type="project" value="TreeGrafter"/>
</dbReference>
<dbReference type="GO" id="GO:0005524">
    <property type="term" value="F:ATP binding"/>
    <property type="evidence" value="ECO:0007669"/>
    <property type="project" value="UniProtKB-UniRule"/>
</dbReference>
<dbReference type="GO" id="GO:0004817">
    <property type="term" value="F:cysteine-tRNA ligase activity"/>
    <property type="evidence" value="ECO:0007669"/>
    <property type="project" value="UniProtKB-UniRule"/>
</dbReference>
<dbReference type="GO" id="GO:0008270">
    <property type="term" value="F:zinc ion binding"/>
    <property type="evidence" value="ECO:0007669"/>
    <property type="project" value="UniProtKB-UniRule"/>
</dbReference>
<dbReference type="GO" id="GO:0006423">
    <property type="term" value="P:cysteinyl-tRNA aminoacylation"/>
    <property type="evidence" value="ECO:0007669"/>
    <property type="project" value="UniProtKB-UniRule"/>
</dbReference>
<dbReference type="CDD" id="cd07963">
    <property type="entry name" value="Anticodon_Ia_Cys"/>
    <property type="match status" value="1"/>
</dbReference>
<dbReference type="CDD" id="cd00672">
    <property type="entry name" value="CysRS_core"/>
    <property type="match status" value="1"/>
</dbReference>
<dbReference type="FunFam" id="3.40.50.620:FF:000009">
    <property type="entry name" value="Cysteine--tRNA ligase"/>
    <property type="match status" value="1"/>
</dbReference>
<dbReference type="Gene3D" id="1.20.120.1910">
    <property type="entry name" value="Cysteine-tRNA ligase, C-terminal anti-codon recognition domain"/>
    <property type="match status" value="1"/>
</dbReference>
<dbReference type="Gene3D" id="3.40.50.620">
    <property type="entry name" value="HUPs"/>
    <property type="match status" value="1"/>
</dbReference>
<dbReference type="HAMAP" id="MF_00041">
    <property type="entry name" value="Cys_tRNA_synth"/>
    <property type="match status" value="1"/>
</dbReference>
<dbReference type="InterPro" id="IPR015803">
    <property type="entry name" value="Cys-tRNA-ligase"/>
</dbReference>
<dbReference type="InterPro" id="IPR015273">
    <property type="entry name" value="Cys-tRNA-synt_Ia_DALR"/>
</dbReference>
<dbReference type="InterPro" id="IPR024909">
    <property type="entry name" value="Cys-tRNA/MSH_ligase"/>
</dbReference>
<dbReference type="InterPro" id="IPR056411">
    <property type="entry name" value="CysS_C"/>
</dbReference>
<dbReference type="InterPro" id="IPR014729">
    <property type="entry name" value="Rossmann-like_a/b/a_fold"/>
</dbReference>
<dbReference type="InterPro" id="IPR032678">
    <property type="entry name" value="tRNA-synt_1_cat_dom"/>
</dbReference>
<dbReference type="InterPro" id="IPR009080">
    <property type="entry name" value="tRNAsynth_Ia_anticodon-bd"/>
</dbReference>
<dbReference type="NCBIfam" id="TIGR00435">
    <property type="entry name" value="cysS"/>
    <property type="match status" value="1"/>
</dbReference>
<dbReference type="PANTHER" id="PTHR10890:SF3">
    <property type="entry name" value="CYSTEINE--TRNA LIGASE, CYTOPLASMIC"/>
    <property type="match status" value="1"/>
</dbReference>
<dbReference type="PANTHER" id="PTHR10890">
    <property type="entry name" value="CYSTEINYL-TRNA SYNTHETASE"/>
    <property type="match status" value="1"/>
</dbReference>
<dbReference type="Pfam" id="PF23493">
    <property type="entry name" value="CysS_C"/>
    <property type="match status" value="1"/>
</dbReference>
<dbReference type="Pfam" id="PF09190">
    <property type="entry name" value="DALR_2"/>
    <property type="match status" value="1"/>
</dbReference>
<dbReference type="Pfam" id="PF01406">
    <property type="entry name" value="tRNA-synt_1e"/>
    <property type="match status" value="1"/>
</dbReference>
<dbReference type="PRINTS" id="PR00983">
    <property type="entry name" value="TRNASYNTHCYS"/>
</dbReference>
<dbReference type="SMART" id="SM00840">
    <property type="entry name" value="DALR_2"/>
    <property type="match status" value="1"/>
</dbReference>
<dbReference type="SUPFAM" id="SSF47323">
    <property type="entry name" value="Anticodon-binding domain of a subclass of class I aminoacyl-tRNA synthetases"/>
    <property type="match status" value="1"/>
</dbReference>
<dbReference type="SUPFAM" id="SSF52374">
    <property type="entry name" value="Nucleotidylyl transferase"/>
    <property type="match status" value="1"/>
</dbReference>
<comment type="catalytic activity">
    <reaction evidence="1">
        <text>tRNA(Cys) + L-cysteine + ATP = L-cysteinyl-tRNA(Cys) + AMP + diphosphate</text>
        <dbReference type="Rhea" id="RHEA:17773"/>
        <dbReference type="Rhea" id="RHEA-COMP:9661"/>
        <dbReference type="Rhea" id="RHEA-COMP:9679"/>
        <dbReference type="ChEBI" id="CHEBI:30616"/>
        <dbReference type="ChEBI" id="CHEBI:33019"/>
        <dbReference type="ChEBI" id="CHEBI:35235"/>
        <dbReference type="ChEBI" id="CHEBI:78442"/>
        <dbReference type="ChEBI" id="CHEBI:78517"/>
        <dbReference type="ChEBI" id="CHEBI:456215"/>
        <dbReference type="EC" id="6.1.1.16"/>
    </reaction>
</comment>
<comment type="cofactor">
    <cofactor evidence="1">
        <name>Zn(2+)</name>
        <dbReference type="ChEBI" id="CHEBI:29105"/>
    </cofactor>
    <text evidence="1">Binds 1 zinc ion per subunit.</text>
</comment>
<comment type="subunit">
    <text evidence="1">Monomer.</text>
</comment>
<comment type="subcellular location">
    <subcellularLocation>
        <location evidence="1">Cytoplasm</location>
    </subcellularLocation>
</comment>
<comment type="similarity">
    <text evidence="1">Belongs to the class-I aminoacyl-tRNA synthetase family.</text>
</comment>